<accession>Q2FET9</accession>
<keyword id="KW-0067">ATP-binding</keyword>
<keyword id="KW-0418">Kinase</keyword>
<keyword id="KW-0423">Lactose metabolism</keyword>
<keyword id="KW-0547">Nucleotide-binding</keyword>
<keyword id="KW-0808">Transferase</keyword>
<evidence type="ECO:0000255" key="1">
    <source>
        <dbReference type="HAMAP-Rule" id="MF_01557"/>
    </source>
</evidence>
<reference key="1">
    <citation type="journal article" date="2006" name="Lancet">
        <title>Complete genome sequence of USA300, an epidemic clone of community-acquired meticillin-resistant Staphylococcus aureus.</title>
        <authorList>
            <person name="Diep B.A."/>
            <person name="Gill S.R."/>
            <person name="Chang R.F."/>
            <person name="Phan T.H."/>
            <person name="Chen J.H."/>
            <person name="Davidson M.G."/>
            <person name="Lin F."/>
            <person name="Lin J."/>
            <person name="Carleton H.A."/>
            <person name="Mongodin E.F."/>
            <person name="Sensabaugh G.F."/>
            <person name="Perdreau-Remington F."/>
        </authorList>
    </citation>
    <scope>NUCLEOTIDE SEQUENCE [LARGE SCALE GENOMIC DNA]</scope>
    <source>
        <strain>USA300</strain>
    </source>
</reference>
<gene>
    <name evidence="1" type="primary">lacC</name>
    <name type="ordered locus">SAUSA300_2153</name>
</gene>
<comment type="catalytic activity">
    <reaction evidence="1">
        <text>D-tagatofuranose 6-phosphate + ATP = D-tagatofuranose 1,6-bisphosphate + ADP + H(+)</text>
        <dbReference type="Rhea" id="RHEA:12420"/>
        <dbReference type="ChEBI" id="CHEBI:15378"/>
        <dbReference type="ChEBI" id="CHEBI:30616"/>
        <dbReference type="ChEBI" id="CHEBI:58694"/>
        <dbReference type="ChEBI" id="CHEBI:58695"/>
        <dbReference type="ChEBI" id="CHEBI:456216"/>
        <dbReference type="EC" id="2.7.1.144"/>
    </reaction>
</comment>
<comment type="pathway">
    <text evidence="1">Carbohydrate metabolism; D-tagatose 6-phosphate degradation; D-glyceraldehyde 3-phosphate and glycerone phosphate from D-tagatose 6-phosphate: step 1/2.</text>
</comment>
<comment type="similarity">
    <text evidence="1">Belongs to the carbohydrate kinase PfkB family. LacC subfamily.</text>
</comment>
<protein>
    <recommendedName>
        <fullName evidence="1">Tagatose-6-phosphate kinase</fullName>
        <ecNumber evidence="1">2.7.1.144</ecNumber>
    </recommendedName>
    <alternativeName>
        <fullName evidence="1">Phosphotagatokinase</fullName>
    </alternativeName>
</protein>
<feature type="chain" id="PRO_1000068936" description="Tagatose-6-phosphate kinase">
    <location>
        <begin position="1"/>
        <end position="310"/>
    </location>
</feature>
<sequence length="310" mass="33853">MILTLTLNPSVDISYPLTALKLDDVNRVQEVSKTAGGKGLNVTRVLAQVGEPVLASGFIGGELGQFIAKKLDHADIKHAFYNIKGETRNCIAILHEGQQTEILEQGPEIDNQEAAGFIKHFEQLLEKVEAVAISGSLPKGLNQDYYAQIIERCQNKGVPVILDCSGATLQTVLENPYKPTVIKPNISELYQLLNQPLDESLESLKQAVSQPLFEGIEWIIVSLGAQGAFAKHNHTFYRVNIPTISVLNPVGSGDSTVAGITSAILNHENDHDLLKKANTLGMLNAQEAQTGYVNLNNYDDLFNQIEVLEV</sequence>
<proteinExistence type="inferred from homology"/>
<name>LACC_STAA3</name>
<organism>
    <name type="scientific">Staphylococcus aureus (strain USA300)</name>
    <dbReference type="NCBI Taxonomy" id="367830"/>
    <lineage>
        <taxon>Bacteria</taxon>
        <taxon>Bacillati</taxon>
        <taxon>Bacillota</taxon>
        <taxon>Bacilli</taxon>
        <taxon>Bacillales</taxon>
        <taxon>Staphylococcaceae</taxon>
        <taxon>Staphylococcus</taxon>
    </lineage>
</organism>
<dbReference type="EC" id="2.7.1.144" evidence="1"/>
<dbReference type="EMBL" id="CP000255">
    <property type="protein sequence ID" value="ABD22439.1"/>
    <property type="molecule type" value="Genomic_DNA"/>
</dbReference>
<dbReference type="RefSeq" id="WP_000604135.1">
    <property type="nucleotide sequence ID" value="NZ_CP027476.1"/>
</dbReference>
<dbReference type="SMR" id="Q2FET9"/>
<dbReference type="KEGG" id="saa:SAUSA300_2153"/>
<dbReference type="HOGENOM" id="CLU_050013_5_0_9"/>
<dbReference type="OMA" id="QMIAHAG"/>
<dbReference type="UniPathway" id="UPA00704">
    <property type="reaction ID" value="UER00715"/>
</dbReference>
<dbReference type="Proteomes" id="UP000001939">
    <property type="component" value="Chromosome"/>
</dbReference>
<dbReference type="GO" id="GO:0005829">
    <property type="term" value="C:cytosol"/>
    <property type="evidence" value="ECO:0007669"/>
    <property type="project" value="TreeGrafter"/>
</dbReference>
<dbReference type="GO" id="GO:0005524">
    <property type="term" value="F:ATP binding"/>
    <property type="evidence" value="ECO:0007669"/>
    <property type="project" value="UniProtKB-KW"/>
</dbReference>
<dbReference type="GO" id="GO:0008443">
    <property type="term" value="F:phosphofructokinase activity"/>
    <property type="evidence" value="ECO:0007669"/>
    <property type="project" value="TreeGrafter"/>
</dbReference>
<dbReference type="GO" id="GO:0009024">
    <property type="term" value="F:tagatose-6-phosphate kinase activity"/>
    <property type="evidence" value="ECO:0007669"/>
    <property type="project" value="UniProtKB-UniRule"/>
</dbReference>
<dbReference type="GO" id="GO:2001059">
    <property type="term" value="P:D-tagatose 6-phosphate catabolic process"/>
    <property type="evidence" value="ECO:0007669"/>
    <property type="project" value="UniProtKB-UniRule"/>
</dbReference>
<dbReference type="GO" id="GO:0019512">
    <property type="term" value="P:lactose catabolic process via tagatose-6-phosphate"/>
    <property type="evidence" value="ECO:0007669"/>
    <property type="project" value="InterPro"/>
</dbReference>
<dbReference type="CDD" id="cd01164">
    <property type="entry name" value="FruK_PfkB_like"/>
    <property type="match status" value="1"/>
</dbReference>
<dbReference type="FunFam" id="3.40.1190.20:FF:000001">
    <property type="entry name" value="Phosphofructokinase"/>
    <property type="match status" value="1"/>
</dbReference>
<dbReference type="Gene3D" id="3.40.1190.20">
    <property type="match status" value="1"/>
</dbReference>
<dbReference type="HAMAP" id="MF_01557">
    <property type="entry name" value="LacC"/>
    <property type="match status" value="1"/>
</dbReference>
<dbReference type="InterPro" id="IPR002173">
    <property type="entry name" value="Carboh/pur_kinase_PfkB_CS"/>
</dbReference>
<dbReference type="InterPro" id="IPR005926">
    <property type="entry name" value="LacC"/>
</dbReference>
<dbReference type="InterPro" id="IPR011611">
    <property type="entry name" value="PfkB_dom"/>
</dbReference>
<dbReference type="InterPro" id="IPR029056">
    <property type="entry name" value="Ribokinase-like"/>
</dbReference>
<dbReference type="InterPro" id="IPR017583">
    <property type="entry name" value="Tagatose/fructose_Pkinase"/>
</dbReference>
<dbReference type="NCBIfam" id="TIGR03168">
    <property type="entry name" value="1-PFK"/>
    <property type="match status" value="1"/>
</dbReference>
<dbReference type="NCBIfam" id="TIGR01231">
    <property type="entry name" value="lacC"/>
    <property type="match status" value="1"/>
</dbReference>
<dbReference type="NCBIfam" id="NF010033">
    <property type="entry name" value="PRK13508.1"/>
    <property type="match status" value="1"/>
</dbReference>
<dbReference type="PANTHER" id="PTHR46566:SF5">
    <property type="entry name" value="1-PHOSPHOFRUCTOKINASE"/>
    <property type="match status" value="1"/>
</dbReference>
<dbReference type="PANTHER" id="PTHR46566">
    <property type="entry name" value="1-PHOSPHOFRUCTOKINASE-RELATED"/>
    <property type="match status" value="1"/>
</dbReference>
<dbReference type="Pfam" id="PF00294">
    <property type="entry name" value="PfkB"/>
    <property type="match status" value="1"/>
</dbReference>
<dbReference type="PIRSF" id="PIRSF000535">
    <property type="entry name" value="1PFK/6PFK/LacC"/>
    <property type="match status" value="1"/>
</dbReference>
<dbReference type="SUPFAM" id="SSF53613">
    <property type="entry name" value="Ribokinase-like"/>
    <property type="match status" value="1"/>
</dbReference>
<dbReference type="PROSITE" id="PS00583">
    <property type="entry name" value="PFKB_KINASES_1"/>
    <property type="match status" value="1"/>
</dbReference>
<dbReference type="PROSITE" id="PS00584">
    <property type="entry name" value="PFKB_KINASES_2"/>
    <property type="match status" value="1"/>
</dbReference>